<sequence>MGELGHRRTQTGVVVSDKMEKTVVVRVDRLVKHPLYNKYIKRSVKYKVHDEKNSCKAGDKVQIVECRPLSKDKRWALRQILESAA</sequence>
<proteinExistence type="inferred from homology"/>
<evidence type="ECO:0000255" key="1">
    <source>
        <dbReference type="HAMAP-Rule" id="MF_01345"/>
    </source>
</evidence>
<evidence type="ECO:0000305" key="2"/>
<dbReference type="EMBL" id="CP001089">
    <property type="protein sequence ID" value="ACD95076.1"/>
    <property type="molecule type" value="Genomic_DNA"/>
</dbReference>
<dbReference type="RefSeq" id="WP_012469421.1">
    <property type="nucleotide sequence ID" value="NC_010814.1"/>
</dbReference>
<dbReference type="SMR" id="B3E7U4"/>
<dbReference type="STRING" id="398767.Glov_1355"/>
<dbReference type="KEGG" id="glo:Glov_1355"/>
<dbReference type="eggNOG" id="COG0186">
    <property type="taxonomic scope" value="Bacteria"/>
</dbReference>
<dbReference type="HOGENOM" id="CLU_073626_1_2_7"/>
<dbReference type="OrthoDB" id="9811714at2"/>
<dbReference type="Proteomes" id="UP000002420">
    <property type="component" value="Chromosome"/>
</dbReference>
<dbReference type="GO" id="GO:0022627">
    <property type="term" value="C:cytosolic small ribosomal subunit"/>
    <property type="evidence" value="ECO:0007669"/>
    <property type="project" value="TreeGrafter"/>
</dbReference>
<dbReference type="GO" id="GO:0019843">
    <property type="term" value="F:rRNA binding"/>
    <property type="evidence" value="ECO:0007669"/>
    <property type="project" value="UniProtKB-UniRule"/>
</dbReference>
<dbReference type="GO" id="GO:0003735">
    <property type="term" value="F:structural constituent of ribosome"/>
    <property type="evidence" value="ECO:0007669"/>
    <property type="project" value="InterPro"/>
</dbReference>
<dbReference type="GO" id="GO:0006412">
    <property type="term" value="P:translation"/>
    <property type="evidence" value="ECO:0007669"/>
    <property type="project" value="UniProtKB-UniRule"/>
</dbReference>
<dbReference type="CDD" id="cd00364">
    <property type="entry name" value="Ribosomal_uS17"/>
    <property type="match status" value="1"/>
</dbReference>
<dbReference type="Gene3D" id="2.40.50.140">
    <property type="entry name" value="Nucleic acid-binding proteins"/>
    <property type="match status" value="1"/>
</dbReference>
<dbReference type="HAMAP" id="MF_01345_B">
    <property type="entry name" value="Ribosomal_uS17_B"/>
    <property type="match status" value="1"/>
</dbReference>
<dbReference type="InterPro" id="IPR012340">
    <property type="entry name" value="NA-bd_OB-fold"/>
</dbReference>
<dbReference type="InterPro" id="IPR000266">
    <property type="entry name" value="Ribosomal_uS17"/>
</dbReference>
<dbReference type="InterPro" id="IPR019984">
    <property type="entry name" value="Ribosomal_uS17_bact/chlr"/>
</dbReference>
<dbReference type="InterPro" id="IPR019979">
    <property type="entry name" value="Ribosomal_uS17_CS"/>
</dbReference>
<dbReference type="NCBIfam" id="NF004123">
    <property type="entry name" value="PRK05610.1"/>
    <property type="match status" value="1"/>
</dbReference>
<dbReference type="NCBIfam" id="TIGR03635">
    <property type="entry name" value="uS17_bact"/>
    <property type="match status" value="1"/>
</dbReference>
<dbReference type="PANTHER" id="PTHR10744">
    <property type="entry name" value="40S RIBOSOMAL PROTEIN S11 FAMILY MEMBER"/>
    <property type="match status" value="1"/>
</dbReference>
<dbReference type="PANTHER" id="PTHR10744:SF1">
    <property type="entry name" value="SMALL RIBOSOMAL SUBUNIT PROTEIN US17M"/>
    <property type="match status" value="1"/>
</dbReference>
<dbReference type="Pfam" id="PF00366">
    <property type="entry name" value="Ribosomal_S17"/>
    <property type="match status" value="1"/>
</dbReference>
<dbReference type="PRINTS" id="PR00973">
    <property type="entry name" value="RIBOSOMALS17"/>
</dbReference>
<dbReference type="SUPFAM" id="SSF50249">
    <property type="entry name" value="Nucleic acid-binding proteins"/>
    <property type="match status" value="1"/>
</dbReference>
<dbReference type="PROSITE" id="PS00056">
    <property type="entry name" value="RIBOSOMAL_S17"/>
    <property type="match status" value="1"/>
</dbReference>
<keyword id="KW-1185">Reference proteome</keyword>
<keyword id="KW-0687">Ribonucleoprotein</keyword>
<keyword id="KW-0689">Ribosomal protein</keyword>
<keyword id="KW-0694">RNA-binding</keyword>
<keyword id="KW-0699">rRNA-binding</keyword>
<protein>
    <recommendedName>
        <fullName evidence="1">Small ribosomal subunit protein uS17</fullName>
    </recommendedName>
    <alternativeName>
        <fullName evidence="2">30S ribosomal protein S17</fullName>
    </alternativeName>
</protein>
<comment type="function">
    <text evidence="1">One of the primary rRNA binding proteins, it binds specifically to the 5'-end of 16S ribosomal RNA.</text>
</comment>
<comment type="subunit">
    <text evidence="1">Part of the 30S ribosomal subunit.</text>
</comment>
<comment type="similarity">
    <text evidence="1">Belongs to the universal ribosomal protein uS17 family.</text>
</comment>
<name>RS17_TRIL1</name>
<organism>
    <name type="scientific">Trichlorobacter lovleyi (strain ATCC BAA-1151 / DSM 17278 / SZ)</name>
    <name type="common">Geobacter lovleyi</name>
    <dbReference type="NCBI Taxonomy" id="398767"/>
    <lineage>
        <taxon>Bacteria</taxon>
        <taxon>Pseudomonadati</taxon>
        <taxon>Thermodesulfobacteriota</taxon>
        <taxon>Desulfuromonadia</taxon>
        <taxon>Geobacterales</taxon>
        <taxon>Geobacteraceae</taxon>
        <taxon>Trichlorobacter</taxon>
    </lineage>
</organism>
<feature type="chain" id="PRO_1000143262" description="Small ribosomal subunit protein uS17">
    <location>
        <begin position="1"/>
        <end position="85"/>
    </location>
</feature>
<accession>B3E7U4</accession>
<gene>
    <name evidence="1" type="primary">rpsQ</name>
    <name type="ordered locus">Glov_1355</name>
</gene>
<reference key="1">
    <citation type="submission" date="2008-05" db="EMBL/GenBank/DDBJ databases">
        <title>Complete sequence of chromosome of Geobacter lovleyi SZ.</title>
        <authorList>
            <consortium name="US DOE Joint Genome Institute"/>
            <person name="Lucas S."/>
            <person name="Copeland A."/>
            <person name="Lapidus A."/>
            <person name="Glavina del Rio T."/>
            <person name="Dalin E."/>
            <person name="Tice H."/>
            <person name="Bruce D."/>
            <person name="Goodwin L."/>
            <person name="Pitluck S."/>
            <person name="Chertkov O."/>
            <person name="Meincke L."/>
            <person name="Brettin T."/>
            <person name="Detter J.C."/>
            <person name="Han C."/>
            <person name="Tapia R."/>
            <person name="Kuske C.R."/>
            <person name="Schmutz J."/>
            <person name="Larimer F."/>
            <person name="Land M."/>
            <person name="Hauser L."/>
            <person name="Kyrpides N."/>
            <person name="Mikhailova N."/>
            <person name="Sung Y."/>
            <person name="Fletcher K.E."/>
            <person name="Ritalahti K.M."/>
            <person name="Loeffler F.E."/>
            <person name="Richardson P."/>
        </authorList>
    </citation>
    <scope>NUCLEOTIDE SEQUENCE [LARGE SCALE GENOMIC DNA]</scope>
    <source>
        <strain>ATCC BAA-1151 / DSM 17278 / SZ</strain>
    </source>
</reference>